<proteinExistence type="inferred from homology"/>
<evidence type="ECO:0000255" key="1">
    <source>
        <dbReference type="HAMAP-Rule" id="MF_01661"/>
    </source>
</evidence>
<keyword id="KW-0119">Carbohydrate metabolism</keyword>
<keyword id="KW-0963">Cytoplasm</keyword>
<keyword id="KW-0413">Isomerase</keyword>
<feature type="chain" id="PRO_0000346240" description="D-ribose pyranase">
    <location>
        <begin position="1"/>
        <end position="132"/>
    </location>
</feature>
<feature type="active site" description="Proton donor" evidence="1">
    <location>
        <position position="20"/>
    </location>
</feature>
<feature type="binding site" evidence="1">
    <location>
        <position position="28"/>
    </location>
    <ligand>
        <name>substrate</name>
    </ligand>
</feature>
<feature type="binding site" evidence="1">
    <location>
        <position position="99"/>
    </location>
    <ligand>
        <name>substrate</name>
    </ligand>
</feature>
<feature type="binding site" evidence="1">
    <location>
        <begin position="121"/>
        <end position="123"/>
    </location>
    <ligand>
        <name>substrate</name>
    </ligand>
</feature>
<reference key="1">
    <citation type="submission" date="2008-02" db="EMBL/GenBank/DDBJ databases">
        <title>Complete sequence of Pseudomonas putida W619.</title>
        <authorList>
            <person name="Copeland A."/>
            <person name="Lucas S."/>
            <person name="Lapidus A."/>
            <person name="Barry K."/>
            <person name="Detter J.C."/>
            <person name="Glavina del Rio T."/>
            <person name="Dalin E."/>
            <person name="Tice H."/>
            <person name="Pitluck S."/>
            <person name="Chain P."/>
            <person name="Malfatti S."/>
            <person name="Shin M."/>
            <person name="Vergez L."/>
            <person name="Schmutz J."/>
            <person name="Larimer F."/>
            <person name="Land M."/>
            <person name="Hauser L."/>
            <person name="Kyrpides N."/>
            <person name="Kim E."/>
            <person name="Taghavi S."/>
            <person name="Vangronsveld D."/>
            <person name="van der Lelie D."/>
            <person name="Richardson P."/>
        </authorList>
    </citation>
    <scope>NUCLEOTIDE SEQUENCE [LARGE SCALE GENOMIC DNA]</scope>
    <source>
        <strain>W619</strain>
    </source>
</reference>
<dbReference type="EC" id="5.4.99.62" evidence="1"/>
<dbReference type="EMBL" id="CP000949">
    <property type="protein sequence ID" value="ACA72464.1"/>
    <property type="molecule type" value="Genomic_DNA"/>
</dbReference>
<dbReference type="SMR" id="B1J6T8"/>
<dbReference type="STRING" id="390235.PputW619_1961"/>
<dbReference type="KEGG" id="ppw:PputW619_1961"/>
<dbReference type="eggNOG" id="COG1869">
    <property type="taxonomic scope" value="Bacteria"/>
</dbReference>
<dbReference type="HOGENOM" id="CLU_135498_0_0_6"/>
<dbReference type="OrthoDB" id="9805009at2"/>
<dbReference type="UniPathway" id="UPA00916">
    <property type="reaction ID" value="UER00888"/>
</dbReference>
<dbReference type="GO" id="GO:0005829">
    <property type="term" value="C:cytosol"/>
    <property type="evidence" value="ECO:0007669"/>
    <property type="project" value="TreeGrafter"/>
</dbReference>
<dbReference type="GO" id="GO:0062193">
    <property type="term" value="F:D-ribose pyranase activity"/>
    <property type="evidence" value="ECO:0007669"/>
    <property type="project" value="UniProtKB-EC"/>
</dbReference>
<dbReference type="GO" id="GO:0016872">
    <property type="term" value="F:intramolecular lyase activity"/>
    <property type="evidence" value="ECO:0007669"/>
    <property type="project" value="UniProtKB-UniRule"/>
</dbReference>
<dbReference type="GO" id="GO:0048029">
    <property type="term" value="F:monosaccharide binding"/>
    <property type="evidence" value="ECO:0007669"/>
    <property type="project" value="InterPro"/>
</dbReference>
<dbReference type="GO" id="GO:0019303">
    <property type="term" value="P:D-ribose catabolic process"/>
    <property type="evidence" value="ECO:0007669"/>
    <property type="project" value="UniProtKB-UniRule"/>
</dbReference>
<dbReference type="Gene3D" id="3.40.1650.10">
    <property type="entry name" value="RbsD-like domain"/>
    <property type="match status" value="1"/>
</dbReference>
<dbReference type="HAMAP" id="MF_01661">
    <property type="entry name" value="D_rib_pyranase"/>
    <property type="match status" value="1"/>
</dbReference>
<dbReference type="InterPro" id="IPR023064">
    <property type="entry name" value="D-ribose_pyranase"/>
</dbReference>
<dbReference type="InterPro" id="IPR023750">
    <property type="entry name" value="RbsD-like_sf"/>
</dbReference>
<dbReference type="InterPro" id="IPR007721">
    <property type="entry name" value="RbsD_FucU"/>
</dbReference>
<dbReference type="NCBIfam" id="NF008761">
    <property type="entry name" value="PRK11797.1"/>
    <property type="match status" value="1"/>
</dbReference>
<dbReference type="PANTHER" id="PTHR37831">
    <property type="entry name" value="D-RIBOSE PYRANASE"/>
    <property type="match status" value="1"/>
</dbReference>
<dbReference type="PANTHER" id="PTHR37831:SF1">
    <property type="entry name" value="D-RIBOSE PYRANASE"/>
    <property type="match status" value="1"/>
</dbReference>
<dbReference type="Pfam" id="PF05025">
    <property type="entry name" value="RbsD_FucU"/>
    <property type="match status" value="1"/>
</dbReference>
<dbReference type="SUPFAM" id="SSF102546">
    <property type="entry name" value="RbsD-like"/>
    <property type="match status" value="1"/>
</dbReference>
<comment type="function">
    <text evidence="1">Catalyzes the interconversion of beta-pyran and beta-furan forms of D-ribose.</text>
</comment>
<comment type="catalytic activity">
    <reaction evidence="1">
        <text>beta-D-ribopyranose = beta-D-ribofuranose</text>
        <dbReference type="Rhea" id="RHEA:25432"/>
        <dbReference type="ChEBI" id="CHEBI:27476"/>
        <dbReference type="ChEBI" id="CHEBI:47002"/>
        <dbReference type="EC" id="5.4.99.62"/>
    </reaction>
</comment>
<comment type="pathway">
    <text evidence="1">Carbohydrate metabolism; D-ribose degradation; D-ribose 5-phosphate from beta-D-ribopyranose: step 1/2.</text>
</comment>
<comment type="subunit">
    <text evidence="1">Homodecamer.</text>
</comment>
<comment type="subcellular location">
    <subcellularLocation>
        <location evidence="1">Cytoplasm</location>
    </subcellularLocation>
</comment>
<comment type="similarity">
    <text evidence="1">Belongs to the RbsD / FucU family. RbsD subfamily.</text>
</comment>
<sequence length="132" mass="14257">MKKTALLNIALSRTIAGLGHGDILVIGDAGLPVPPGVELIDLALTPGIPDFASVLRAVLSEMQVERHVLAEEMQKVVPPGLVEIERLRGKLGKREWLSHEQFKVLSRSARAVVRTGECQPYSNIALIAGVTF</sequence>
<accession>B1J6T8</accession>
<name>RBSD_PSEPW</name>
<gene>
    <name evidence="1" type="primary">rbsD</name>
    <name type="ordered locus">PputW619_1961</name>
</gene>
<protein>
    <recommendedName>
        <fullName evidence="1">D-ribose pyranase</fullName>
        <ecNumber evidence="1">5.4.99.62</ecNumber>
    </recommendedName>
</protein>
<organism>
    <name type="scientific">Pseudomonas putida (strain W619)</name>
    <dbReference type="NCBI Taxonomy" id="390235"/>
    <lineage>
        <taxon>Bacteria</taxon>
        <taxon>Pseudomonadati</taxon>
        <taxon>Pseudomonadota</taxon>
        <taxon>Gammaproteobacteria</taxon>
        <taxon>Pseudomonadales</taxon>
        <taxon>Pseudomonadaceae</taxon>
        <taxon>Pseudomonas</taxon>
    </lineage>
</organism>